<proteinExistence type="inferred from homology"/>
<keyword id="KW-0067">ATP-binding</keyword>
<keyword id="KW-0173">Coenzyme A biosynthesis</keyword>
<keyword id="KW-0963">Cytoplasm</keyword>
<keyword id="KW-0418">Kinase</keyword>
<keyword id="KW-0547">Nucleotide-binding</keyword>
<keyword id="KW-1185">Reference proteome</keyword>
<keyword id="KW-0808">Transferase</keyword>
<evidence type="ECO:0000255" key="1">
    <source>
        <dbReference type="HAMAP-Rule" id="MF_00376"/>
    </source>
</evidence>
<protein>
    <recommendedName>
        <fullName evidence="1">Dephospho-CoA kinase</fullName>
        <ecNumber evidence="1">2.7.1.24</ecNumber>
    </recommendedName>
    <alternativeName>
        <fullName evidence="1">Dephosphocoenzyme A kinase</fullName>
    </alternativeName>
</protein>
<feature type="chain" id="PRO_0000243312" description="Dephospho-CoA kinase">
    <location>
        <begin position="1"/>
        <end position="201"/>
    </location>
</feature>
<feature type="domain" description="DPCK" evidence="1">
    <location>
        <begin position="6"/>
        <end position="201"/>
    </location>
</feature>
<feature type="binding site" evidence="1">
    <location>
        <begin position="14"/>
        <end position="19"/>
    </location>
    <ligand>
        <name>ATP</name>
        <dbReference type="ChEBI" id="CHEBI:30616"/>
    </ligand>
</feature>
<reference key="1">
    <citation type="submission" date="2006-01" db="EMBL/GenBank/DDBJ databases">
        <title>Complete sequence of Novosphingobium aromaticivorans DSM 12444.</title>
        <authorList>
            <consortium name="US DOE Joint Genome Institute"/>
            <person name="Copeland A."/>
            <person name="Lucas S."/>
            <person name="Lapidus A."/>
            <person name="Barry K."/>
            <person name="Detter J.C."/>
            <person name="Glavina T."/>
            <person name="Hammon N."/>
            <person name="Israni S."/>
            <person name="Pitluck S."/>
            <person name="Chain P."/>
            <person name="Malfatti S."/>
            <person name="Shin M."/>
            <person name="Vergez L."/>
            <person name="Schmutz J."/>
            <person name="Larimer F."/>
            <person name="Land M."/>
            <person name="Kyrpides N."/>
            <person name="Ivanova N."/>
            <person name="Fredrickson J."/>
            <person name="Balkwill D."/>
            <person name="Romine M.F."/>
            <person name="Richardson P."/>
        </authorList>
    </citation>
    <scope>NUCLEOTIDE SEQUENCE [LARGE SCALE GENOMIC DNA]</scope>
    <source>
        <strain>ATCC 700278 / DSM 12444 / CCUG 56034 / CIP 105152 / NBRC 16084 / F199</strain>
    </source>
</reference>
<sequence>MTRPFVMGLTGSIGMGKSAVALMLREMGVPVFDADAAVHQLQGPRGPLLPAIEAAFPGTTGPEGVKRQDLGARVFGDADALRRLEAIVHPAVARMREAFMIEHMGEPLVVFDIPLLFEKGHGKDLDAVMVVSAPAEVQRQRVLARPGMTVEKFAHILSLQVPDAEKRARADYVIDTGLTLAETEGQVAELVRAIREKNPRG</sequence>
<accession>Q2GC60</accession>
<dbReference type="EC" id="2.7.1.24" evidence="1"/>
<dbReference type="EMBL" id="CP000248">
    <property type="protein sequence ID" value="ABD24563.1"/>
    <property type="molecule type" value="Genomic_DNA"/>
</dbReference>
<dbReference type="RefSeq" id="WP_011443777.1">
    <property type="nucleotide sequence ID" value="NC_007794.1"/>
</dbReference>
<dbReference type="SMR" id="Q2GC60"/>
<dbReference type="STRING" id="279238.Saro_0114"/>
<dbReference type="KEGG" id="nar:Saro_0114"/>
<dbReference type="eggNOG" id="COG0237">
    <property type="taxonomic scope" value="Bacteria"/>
</dbReference>
<dbReference type="HOGENOM" id="CLU_057180_3_0_5"/>
<dbReference type="UniPathway" id="UPA00241">
    <property type="reaction ID" value="UER00356"/>
</dbReference>
<dbReference type="Proteomes" id="UP000009134">
    <property type="component" value="Chromosome"/>
</dbReference>
<dbReference type="GO" id="GO:0005737">
    <property type="term" value="C:cytoplasm"/>
    <property type="evidence" value="ECO:0007669"/>
    <property type="project" value="UniProtKB-SubCell"/>
</dbReference>
<dbReference type="GO" id="GO:0005524">
    <property type="term" value="F:ATP binding"/>
    <property type="evidence" value="ECO:0007669"/>
    <property type="project" value="UniProtKB-UniRule"/>
</dbReference>
<dbReference type="GO" id="GO:0004140">
    <property type="term" value="F:dephospho-CoA kinase activity"/>
    <property type="evidence" value="ECO:0007669"/>
    <property type="project" value="UniProtKB-UniRule"/>
</dbReference>
<dbReference type="GO" id="GO:0015937">
    <property type="term" value="P:coenzyme A biosynthetic process"/>
    <property type="evidence" value="ECO:0007669"/>
    <property type="project" value="UniProtKB-UniRule"/>
</dbReference>
<dbReference type="CDD" id="cd02022">
    <property type="entry name" value="DPCK"/>
    <property type="match status" value="1"/>
</dbReference>
<dbReference type="Gene3D" id="3.40.50.300">
    <property type="entry name" value="P-loop containing nucleotide triphosphate hydrolases"/>
    <property type="match status" value="1"/>
</dbReference>
<dbReference type="HAMAP" id="MF_00376">
    <property type="entry name" value="Dephospho_CoA_kinase"/>
    <property type="match status" value="1"/>
</dbReference>
<dbReference type="InterPro" id="IPR001977">
    <property type="entry name" value="Depp_CoAkinase"/>
</dbReference>
<dbReference type="InterPro" id="IPR027417">
    <property type="entry name" value="P-loop_NTPase"/>
</dbReference>
<dbReference type="NCBIfam" id="TIGR00152">
    <property type="entry name" value="dephospho-CoA kinase"/>
    <property type="match status" value="1"/>
</dbReference>
<dbReference type="PANTHER" id="PTHR10695:SF46">
    <property type="entry name" value="BIFUNCTIONAL COENZYME A SYNTHASE-RELATED"/>
    <property type="match status" value="1"/>
</dbReference>
<dbReference type="PANTHER" id="PTHR10695">
    <property type="entry name" value="DEPHOSPHO-COA KINASE-RELATED"/>
    <property type="match status" value="1"/>
</dbReference>
<dbReference type="Pfam" id="PF01121">
    <property type="entry name" value="CoaE"/>
    <property type="match status" value="1"/>
</dbReference>
<dbReference type="SUPFAM" id="SSF52540">
    <property type="entry name" value="P-loop containing nucleoside triphosphate hydrolases"/>
    <property type="match status" value="1"/>
</dbReference>
<dbReference type="PROSITE" id="PS51219">
    <property type="entry name" value="DPCK"/>
    <property type="match status" value="1"/>
</dbReference>
<comment type="function">
    <text evidence="1">Catalyzes the phosphorylation of the 3'-hydroxyl group of dephosphocoenzyme A to form coenzyme A.</text>
</comment>
<comment type="catalytic activity">
    <reaction evidence="1">
        <text>3'-dephospho-CoA + ATP = ADP + CoA + H(+)</text>
        <dbReference type="Rhea" id="RHEA:18245"/>
        <dbReference type="ChEBI" id="CHEBI:15378"/>
        <dbReference type="ChEBI" id="CHEBI:30616"/>
        <dbReference type="ChEBI" id="CHEBI:57287"/>
        <dbReference type="ChEBI" id="CHEBI:57328"/>
        <dbReference type="ChEBI" id="CHEBI:456216"/>
        <dbReference type="EC" id="2.7.1.24"/>
    </reaction>
</comment>
<comment type="pathway">
    <text evidence="1">Cofactor biosynthesis; coenzyme A biosynthesis; CoA from (R)-pantothenate: step 5/5.</text>
</comment>
<comment type="subcellular location">
    <subcellularLocation>
        <location evidence="1">Cytoplasm</location>
    </subcellularLocation>
</comment>
<comment type="similarity">
    <text evidence="1">Belongs to the CoaE family.</text>
</comment>
<name>COAE_NOVAD</name>
<organism>
    <name type="scientific">Novosphingobium aromaticivorans (strain ATCC 700278 / DSM 12444 / CCUG 56034 / CIP 105152 / NBRC 16084 / F199)</name>
    <dbReference type="NCBI Taxonomy" id="279238"/>
    <lineage>
        <taxon>Bacteria</taxon>
        <taxon>Pseudomonadati</taxon>
        <taxon>Pseudomonadota</taxon>
        <taxon>Alphaproteobacteria</taxon>
        <taxon>Sphingomonadales</taxon>
        <taxon>Sphingomonadaceae</taxon>
        <taxon>Novosphingobium</taxon>
    </lineage>
</organism>
<gene>
    <name evidence="1" type="primary">coaE</name>
    <name type="ordered locus">Saro_0114</name>
</gene>